<accession>Q2K9K4</accession>
<protein>
    <recommendedName>
        <fullName evidence="1">Large ribosomal subunit protein uL5</fullName>
    </recommendedName>
    <alternativeName>
        <fullName evidence="2">50S ribosomal protein L5</fullName>
    </alternativeName>
</protein>
<evidence type="ECO:0000255" key="1">
    <source>
        <dbReference type="HAMAP-Rule" id="MF_01333"/>
    </source>
</evidence>
<evidence type="ECO:0000305" key="2"/>
<sequence>MAEAKYEPRLKKEYVERIRKAMQEKFSYANEMMIPKLDKIVINMGVGEATADSKKPTVAAADLAAIAGQKPVITRARNSIAGFKVRENMPIGAKVTLRGARMYEFLDRLVNIALPRVRDFRGLNPKSFDGRGNFAMGIKEHIVFPEINYDKVDQMWGMDIIVCTTATTDDEARTLLKEFSFPFRQ</sequence>
<organism>
    <name type="scientific">Rhizobium etli (strain ATCC 51251 / DSM 11541 / JCM 21823 / NBRC 15573 / CFN 42)</name>
    <dbReference type="NCBI Taxonomy" id="347834"/>
    <lineage>
        <taxon>Bacteria</taxon>
        <taxon>Pseudomonadati</taxon>
        <taxon>Pseudomonadota</taxon>
        <taxon>Alphaproteobacteria</taxon>
        <taxon>Hyphomicrobiales</taxon>
        <taxon>Rhizobiaceae</taxon>
        <taxon>Rhizobium/Agrobacterium group</taxon>
        <taxon>Rhizobium</taxon>
    </lineage>
</organism>
<keyword id="KW-1185">Reference proteome</keyword>
<keyword id="KW-0687">Ribonucleoprotein</keyword>
<keyword id="KW-0689">Ribosomal protein</keyword>
<keyword id="KW-0694">RNA-binding</keyword>
<keyword id="KW-0699">rRNA-binding</keyword>
<keyword id="KW-0820">tRNA-binding</keyword>
<gene>
    <name evidence="1" type="primary">rplE</name>
    <name type="ordered locus">RHE_CH01687</name>
</gene>
<reference key="1">
    <citation type="journal article" date="2006" name="Proc. Natl. Acad. Sci. U.S.A.">
        <title>The partitioned Rhizobium etli genome: genetic and metabolic redundancy in seven interacting replicons.</title>
        <authorList>
            <person name="Gonzalez V."/>
            <person name="Santamaria R.I."/>
            <person name="Bustos P."/>
            <person name="Hernandez-Gonzalez I."/>
            <person name="Medrano-Soto A."/>
            <person name="Moreno-Hagelsieb G."/>
            <person name="Janga S.C."/>
            <person name="Ramirez M.A."/>
            <person name="Jimenez-Jacinto V."/>
            <person name="Collado-Vides J."/>
            <person name="Davila G."/>
        </authorList>
    </citation>
    <scope>NUCLEOTIDE SEQUENCE [LARGE SCALE GENOMIC DNA]</scope>
    <source>
        <strain>ATCC 51251 / DSM 11541 / JCM 21823 / NBRC 15573 / CFN 42</strain>
    </source>
</reference>
<name>RL5_RHIEC</name>
<dbReference type="EMBL" id="CP000133">
    <property type="protein sequence ID" value="ABC90482.1"/>
    <property type="molecule type" value="Genomic_DNA"/>
</dbReference>
<dbReference type="RefSeq" id="WP_011424985.1">
    <property type="nucleotide sequence ID" value="NC_007761.1"/>
</dbReference>
<dbReference type="SMR" id="Q2K9K4"/>
<dbReference type="GeneID" id="66141443"/>
<dbReference type="KEGG" id="ret:RHE_CH01687"/>
<dbReference type="eggNOG" id="COG0094">
    <property type="taxonomic scope" value="Bacteria"/>
</dbReference>
<dbReference type="HOGENOM" id="CLU_061015_2_1_5"/>
<dbReference type="OrthoDB" id="9806626at2"/>
<dbReference type="Proteomes" id="UP000001936">
    <property type="component" value="Chromosome"/>
</dbReference>
<dbReference type="GO" id="GO:1990904">
    <property type="term" value="C:ribonucleoprotein complex"/>
    <property type="evidence" value="ECO:0007669"/>
    <property type="project" value="UniProtKB-KW"/>
</dbReference>
<dbReference type="GO" id="GO:0005840">
    <property type="term" value="C:ribosome"/>
    <property type="evidence" value="ECO:0007669"/>
    <property type="project" value="UniProtKB-KW"/>
</dbReference>
<dbReference type="GO" id="GO:0019843">
    <property type="term" value="F:rRNA binding"/>
    <property type="evidence" value="ECO:0007669"/>
    <property type="project" value="UniProtKB-UniRule"/>
</dbReference>
<dbReference type="GO" id="GO:0003735">
    <property type="term" value="F:structural constituent of ribosome"/>
    <property type="evidence" value="ECO:0007669"/>
    <property type="project" value="InterPro"/>
</dbReference>
<dbReference type="GO" id="GO:0000049">
    <property type="term" value="F:tRNA binding"/>
    <property type="evidence" value="ECO:0007669"/>
    <property type="project" value="UniProtKB-UniRule"/>
</dbReference>
<dbReference type="GO" id="GO:0006412">
    <property type="term" value="P:translation"/>
    <property type="evidence" value="ECO:0007669"/>
    <property type="project" value="UniProtKB-UniRule"/>
</dbReference>
<dbReference type="FunFam" id="3.30.1440.10:FF:000001">
    <property type="entry name" value="50S ribosomal protein L5"/>
    <property type="match status" value="1"/>
</dbReference>
<dbReference type="Gene3D" id="3.30.1440.10">
    <property type="match status" value="1"/>
</dbReference>
<dbReference type="HAMAP" id="MF_01333_B">
    <property type="entry name" value="Ribosomal_uL5_B"/>
    <property type="match status" value="1"/>
</dbReference>
<dbReference type="InterPro" id="IPR002132">
    <property type="entry name" value="Ribosomal_uL5"/>
</dbReference>
<dbReference type="InterPro" id="IPR020930">
    <property type="entry name" value="Ribosomal_uL5_bac-type"/>
</dbReference>
<dbReference type="InterPro" id="IPR031309">
    <property type="entry name" value="Ribosomal_uL5_C"/>
</dbReference>
<dbReference type="InterPro" id="IPR020929">
    <property type="entry name" value="Ribosomal_uL5_CS"/>
</dbReference>
<dbReference type="InterPro" id="IPR022803">
    <property type="entry name" value="Ribosomal_uL5_dom_sf"/>
</dbReference>
<dbReference type="InterPro" id="IPR031310">
    <property type="entry name" value="Ribosomal_uL5_N"/>
</dbReference>
<dbReference type="NCBIfam" id="NF000585">
    <property type="entry name" value="PRK00010.1"/>
    <property type="match status" value="1"/>
</dbReference>
<dbReference type="PANTHER" id="PTHR11994">
    <property type="entry name" value="60S RIBOSOMAL PROTEIN L11-RELATED"/>
    <property type="match status" value="1"/>
</dbReference>
<dbReference type="Pfam" id="PF00281">
    <property type="entry name" value="Ribosomal_L5"/>
    <property type="match status" value="1"/>
</dbReference>
<dbReference type="Pfam" id="PF00673">
    <property type="entry name" value="Ribosomal_L5_C"/>
    <property type="match status" value="1"/>
</dbReference>
<dbReference type="PIRSF" id="PIRSF002161">
    <property type="entry name" value="Ribosomal_L5"/>
    <property type="match status" value="1"/>
</dbReference>
<dbReference type="SUPFAM" id="SSF55282">
    <property type="entry name" value="RL5-like"/>
    <property type="match status" value="1"/>
</dbReference>
<dbReference type="PROSITE" id="PS00358">
    <property type="entry name" value="RIBOSOMAL_L5"/>
    <property type="match status" value="1"/>
</dbReference>
<proteinExistence type="inferred from homology"/>
<comment type="function">
    <text evidence="1">This is one of the proteins that bind and probably mediate the attachment of the 5S RNA into the large ribosomal subunit, where it forms part of the central protuberance. In the 70S ribosome it contacts protein S13 of the 30S subunit (bridge B1b), connecting the 2 subunits; this bridge is implicated in subunit movement. Contacts the P site tRNA; the 5S rRNA and some of its associated proteins might help stabilize positioning of ribosome-bound tRNAs.</text>
</comment>
<comment type="subunit">
    <text evidence="1">Part of the 50S ribosomal subunit; part of the 5S rRNA/L5/L18/L25 subcomplex. Contacts the 5S rRNA and the P site tRNA. Forms a bridge to the 30S subunit in the 70S ribosome.</text>
</comment>
<comment type="similarity">
    <text evidence="1">Belongs to the universal ribosomal protein uL5 family.</text>
</comment>
<feature type="chain" id="PRO_0000243049" description="Large ribosomal subunit protein uL5">
    <location>
        <begin position="1"/>
        <end position="185"/>
    </location>
</feature>